<feature type="chain" id="PRO_0000163798" description="Ribonuclease Y">
    <location>
        <begin position="1"/>
        <end position="534"/>
    </location>
</feature>
<feature type="transmembrane region" description="Helical" evidence="1">
    <location>
        <begin position="1"/>
        <end position="21"/>
    </location>
</feature>
<feature type="domain" description="KH" evidence="1">
    <location>
        <begin position="224"/>
        <end position="287"/>
    </location>
</feature>
<feature type="domain" description="HD" evidence="2">
    <location>
        <begin position="350"/>
        <end position="443"/>
    </location>
</feature>
<feature type="region of interest" description="Disordered" evidence="3">
    <location>
        <begin position="109"/>
        <end position="141"/>
    </location>
</feature>
<protein>
    <recommendedName>
        <fullName evidence="1">Ribonuclease Y</fullName>
        <shortName evidence="1">RNase Y</shortName>
        <ecNumber evidence="1">3.1.-.-</ecNumber>
    </recommendedName>
</protein>
<dbReference type="EC" id="3.1.-.-" evidence="1"/>
<dbReference type="EMBL" id="AE007317">
    <property type="protein sequence ID" value="AAL00387.1"/>
    <property type="status" value="ALT_INIT"/>
    <property type="molecule type" value="Genomic_DNA"/>
</dbReference>
<dbReference type="PIR" id="F98069">
    <property type="entry name" value="F98069"/>
</dbReference>
<dbReference type="RefSeq" id="NP_359176.1">
    <property type="nucleotide sequence ID" value="NC_003098.1"/>
</dbReference>
<dbReference type="SMR" id="P67283"/>
<dbReference type="STRING" id="171101.spr1584"/>
<dbReference type="KEGG" id="spr:spr1584"/>
<dbReference type="PATRIC" id="fig|171101.6.peg.1711"/>
<dbReference type="eggNOG" id="COG1418">
    <property type="taxonomic scope" value="Bacteria"/>
</dbReference>
<dbReference type="eggNOG" id="COG3599">
    <property type="taxonomic scope" value="Bacteria"/>
</dbReference>
<dbReference type="HOGENOM" id="CLU_028328_1_0_9"/>
<dbReference type="Proteomes" id="UP000000586">
    <property type="component" value="Chromosome"/>
</dbReference>
<dbReference type="GO" id="GO:0005886">
    <property type="term" value="C:plasma membrane"/>
    <property type="evidence" value="ECO:0007669"/>
    <property type="project" value="UniProtKB-SubCell"/>
</dbReference>
<dbReference type="GO" id="GO:0003723">
    <property type="term" value="F:RNA binding"/>
    <property type="evidence" value="ECO:0007669"/>
    <property type="project" value="UniProtKB-UniRule"/>
</dbReference>
<dbReference type="GO" id="GO:0004521">
    <property type="term" value="F:RNA endonuclease activity"/>
    <property type="evidence" value="ECO:0007669"/>
    <property type="project" value="UniProtKB-UniRule"/>
</dbReference>
<dbReference type="GO" id="GO:0006402">
    <property type="term" value="P:mRNA catabolic process"/>
    <property type="evidence" value="ECO:0007669"/>
    <property type="project" value="UniProtKB-UniRule"/>
</dbReference>
<dbReference type="CDD" id="cd00077">
    <property type="entry name" value="HDc"/>
    <property type="match status" value="1"/>
</dbReference>
<dbReference type="CDD" id="cd22431">
    <property type="entry name" value="KH-I_RNaseY"/>
    <property type="match status" value="1"/>
</dbReference>
<dbReference type="FunFam" id="1.10.3210.10:FF:000003">
    <property type="entry name" value="Ribonuclease Y"/>
    <property type="match status" value="1"/>
</dbReference>
<dbReference type="Gene3D" id="1.10.3210.10">
    <property type="entry name" value="Hypothetical protein af1432"/>
    <property type="match status" value="1"/>
</dbReference>
<dbReference type="Gene3D" id="3.30.1370.10">
    <property type="entry name" value="K Homology domain, type 1"/>
    <property type="match status" value="1"/>
</dbReference>
<dbReference type="HAMAP" id="MF_00335">
    <property type="entry name" value="RNase_Y"/>
    <property type="match status" value="1"/>
</dbReference>
<dbReference type="InterPro" id="IPR003607">
    <property type="entry name" value="HD/PDEase_dom"/>
</dbReference>
<dbReference type="InterPro" id="IPR006674">
    <property type="entry name" value="HD_domain"/>
</dbReference>
<dbReference type="InterPro" id="IPR006675">
    <property type="entry name" value="HDIG_dom"/>
</dbReference>
<dbReference type="InterPro" id="IPR004087">
    <property type="entry name" value="KH_dom"/>
</dbReference>
<dbReference type="InterPro" id="IPR004088">
    <property type="entry name" value="KH_dom_type_1"/>
</dbReference>
<dbReference type="InterPro" id="IPR036612">
    <property type="entry name" value="KH_dom_type_1_sf"/>
</dbReference>
<dbReference type="InterPro" id="IPR017705">
    <property type="entry name" value="Ribonuclease_Y"/>
</dbReference>
<dbReference type="InterPro" id="IPR022711">
    <property type="entry name" value="RNase_Y_N"/>
</dbReference>
<dbReference type="NCBIfam" id="TIGR00277">
    <property type="entry name" value="HDIG"/>
    <property type="match status" value="1"/>
</dbReference>
<dbReference type="NCBIfam" id="NF000997">
    <property type="entry name" value="PRK00106.1"/>
    <property type="match status" value="1"/>
</dbReference>
<dbReference type="NCBIfam" id="TIGR03319">
    <property type="entry name" value="RNase_Y"/>
    <property type="match status" value="1"/>
</dbReference>
<dbReference type="PANTHER" id="PTHR12826">
    <property type="entry name" value="RIBONUCLEASE Y"/>
    <property type="match status" value="1"/>
</dbReference>
<dbReference type="PANTHER" id="PTHR12826:SF15">
    <property type="entry name" value="RIBONUCLEASE Y"/>
    <property type="match status" value="1"/>
</dbReference>
<dbReference type="Pfam" id="PF01966">
    <property type="entry name" value="HD"/>
    <property type="match status" value="1"/>
</dbReference>
<dbReference type="Pfam" id="PF00013">
    <property type="entry name" value="KH_1"/>
    <property type="match status" value="1"/>
</dbReference>
<dbReference type="Pfam" id="PF12072">
    <property type="entry name" value="RNase_Y_N"/>
    <property type="match status" value="1"/>
</dbReference>
<dbReference type="SMART" id="SM00471">
    <property type="entry name" value="HDc"/>
    <property type="match status" value="1"/>
</dbReference>
<dbReference type="SMART" id="SM00322">
    <property type="entry name" value="KH"/>
    <property type="match status" value="1"/>
</dbReference>
<dbReference type="SUPFAM" id="SSF54791">
    <property type="entry name" value="Eukaryotic type KH-domain (KH-domain type I)"/>
    <property type="match status" value="1"/>
</dbReference>
<dbReference type="SUPFAM" id="SSF109604">
    <property type="entry name" value="HD-domain/PDEase-like"/>
    <property type="match status" value="1"/>
</dbReference>
<dbReference type="PROSITE" id="PS51831">
    <property type="entry name" value="HD"/>
    <property type="match status" value="1"/>
</dbReference>
<dbReference type="PROSITE" id="PS50084">
    <property type="entry name" value="KH_TYPE_1"/>
    <property type="match status" value="1"/>
</dbReference>
<keyword id="KW-1003">Cell membrane</keyword>
<keyword id="KW-0255">Endonuclease</keyword>
<keyword id="KW-0378">Hydrolase</keyword>
<keyword id="KW-0472">Membrane</keyword>
<keyword id="KW-0540">Nuclease</keyword>
<keyword id="KW-1185">Reference proteome</keyword>
<keyword id="KW-0694">RNA-binding</keyword>
<keyword id="KW-0812">Transmembrane</keyword>
<keyword id="KW-1133">Transmembrane helix</keyword>
<evidence type="ECO:0000255" key="1">
    <source>
        <dbReference type="HAMAP-Rule" id="MF_00335"/>
    </source>
</evidence>
<evidence type="ECO:0000255" key="2">
    <source>
        <dbReference type="PROSITE-ProRule" id="PRU01175"/>
    </source>
</evidence>
<evidence type="ECO:0000256" key="3">
    <source>
        <dbReference type="SAM" id="MobiDB-lite"/>
    </source>
</evidence>
<evidence type="ECO:0000305" key="4"/>
<accession>P67283</accession>
<accession>Q8DNR4</accession>
<accession>Q97PA2</accession>
<sequence>MSLAIAVFAVIIGLVIGYVSISAKMKSSQEAAELMLLNAEQEATNLRGQAEREADLLVNEAKRESKSLKKEALLEAKEEARKYREEVDAEFKSERQELKQIESRLTERATSLDRKDDNLTSKEQTLEQKEQSISDRAKNLDAREEQLEEVERQKEAELERIGALSQAEARDIILAQTEENLTREIASRIREAEQEVKERSDKMAKDILVQAMQRIAGEYVAESTNSTVHLPDDTMKGRIIGREGRNIRTFESLTGVDVIIDDTPEVVTLSGFDPIRREIARMTMEMLLKDGRIHPARIEELVEKNRQEIDNKIREYGEAAAYEIGAPNLHPDLMKIMGRLQFRTSYGQNVLRHSIEVAKLAGIMASELGENAALARRAGFLHDIGKAIDHEVEGSHVEIGMELARKYKEPPVVVNTIASHHGDVEAESVIAVIVAAADALSAARPGARSESLESYIKRLHDLEEIANGFEGVQTSFALQAGREIRIMVNPGKIKDDKVTILAHKVRKKIENNLDYPGNIKVTVIRELRAVDYAK</sequence>
<gene>
    <name evidence="1" type="primary">rny</name>
    <name type="ordered locus">spr1584</name>
</gene>
<name>RNY_STRR6</name>
<proteinExistence type="inferred from homology"/>
<organism>
    <name type="scientific">Streptococcus pneumoniae (strain ATCC BAA-255 / R6)</name>
    <dbReference type="NCBI Taxonomy" id="171101"/>
    <lineage>
        <taxon>Bacteria</taxon>
        <taxon>Bacillati</taxon>
        <taxon>Bacillota</taxon>
        <taxon>Bacilli</taxon>
        <taxon>Lactobacillales</taxon>
        <taxon>Streptococcaceae</taxon>
        <taxon>Streptococcus</taxon>
    </lineage>
</organism>
<comment type="function">
    <text evidence="1">Endoribonuclease that initiates mRNA decay.</text>
</comment>
<comment type="subcellular location">
    <subcellularLocation>
        <location evidence="1">Cell membrane</location>
        <topology evidence="1">Single-pass membrane protein</topology>
    </subcellularLocation>
</comment>
<comment type="similarity">
    <text evidence="1">Belongs to the RNase Y family.</text>
</comment>
<comment type="sequence caution" evidence="4">
    <conflict type="erroneous initiation">
        <sequence resource="EMBL-CDS" id="AAL00387"/>
    </conflict>
</comment>
<reference key="1">
    <citation type="journal article" date="2001" name="J. Bacteriol.">
        <title>Genome of the bacterium Streptococcus pneumoniae strain R6.</title>
        <authorList>
            <person name="Hoskins J."/>
            <person name="Alborn W.E. Jr."/>
            <person name="Arnold J."/>
            <person name="Blaszczak L.C."/>
            <person name="Burgett S."/>
            <person name="DeHoff B.S."/>
            <person name="Estrem S.T."/>
            <person name="Fritz L."/>
            <person name="Fu D.-J."/>
            <person name="Fuller W."/>
            <person name="Geringer C."/>
            <person name="Gilmour R."/>
            <person name="Glass J.S."/>
            <person name="Khoja H."/>
            <person name="Kraft A.R."/>
            <person name="Lagace R.E."/>
            <person name="LeBlanc D.J."/>
            <person name="Lee L.N."/>
            <person name="Lefkowitz E.J."/>
            <person name="Lu J."/>
            <person name="Matsushima P."/>
            <person name="McAhren S.M."/>
            <person name="McHenney M."/>
            <person name="McLeaster K."/>
            <person name="Mundy C.W."/>
            <person name="Nicas T.I."/>
            <person name="Norris F.H."/>
            <person name="O'Gara M."/>
            <person name="Peery R.B."/>
            <person name="Robertson G.T."/>
            <person name="Rockey P."/>
            <person name="Sun P.-M."/>
            <person name="Winkler M.E."/>
            <person name="Yang Y."/>
            <person name="Young-Bellido M."/>
            <person name="Zhao G."/>
            <person name="Zook C.A."/>
            <person name="Baltz R.H."/>
            <person name="Jaskunas S.R."/>
            <person name="Rosteck P.R. Jr."/>
            <person name="Skatrud P.L."/>
            <person name="Glass J.I."/>
        </authorList>
    </citation>
    <scope>NUCLEOTIDE SEQUENCE [LARGE SCALE GENOMIC DNA]</scope>
    <source>
        <strain>ATCC BAA-255 / R6</strain>
    </source>
</reference>